<organism>
    <name type="scientific">Homo sapiens</name>
    <name type="common">Human</name>
    <dbReference type="NCBI Taxonomy" id="9606"/>
    <lineage>
        <taxon>Eukaryota</taxon>
        <taxon>Metazoa</taxon>
        <taxon>Chordata</taxon>
        <taxon>Craniata</taxon>
        <taxon>Vertebrata</taxon>
        <taxon>Euteleostomi</taxon>
        <taxon>Mammalia</taxon>
        <taxon>Eutheria</taxon>
        <taxon>Euarchontoglires</taxon>
        <taxon>Primates</taxon>
        <taxon>Haplorrhini</taxon>
        <taxon>Catarrhini</taxon>
        <taxon>Hominidae</taxon>
        <taxon>Homo</taxon>
    </lineage>
</organism>
<protein>
    <recommendedName>
        <fullName>Unconventional myosin-VI</fullName>
    </recommendedName>
    <alternativeName>
        <fullName>Unconventional myosin-6</fullName>
    </alternativeName>
</protein>
<keyword id="KW-0002">3D-structure</keyword>
<keyword id="KW-0009">Actin-binding</keyword>
<keyword id="KW-0025">Alternative splicing</keyword>
<keyword id="KW-0067">ATP-binding</keyword>
<keyword id="KW-0112">Calmodulin-binding</keyword>
<keyword id="KW-0122">Cardiomyopathy</keyword>
<keyword id="KW-1003">Cell membrane</keyword>
<keyword id="KW-0966">Cell projection</keyword>
<keyword id="KW-0168">Coated pit</keyword>
<keyword id="KW-0963">Cytoplasm</keyword>
<keyword id="KW-0968">Cytoplasmic vesicle</keyword>
<keyword id="KW-0209">Deafness</keyword>
<keyword id="KW-0225">Disease variant</keyword>
<keyword id="KW-0254">Endocytosis</keyword>
<keyword id="KW-0967">Endosome</keyword>
<keyword id="KW-0333">Golgi apparatus</keyword>
<keyword id="KW-1009">Hearing</keyword>
<keyword id="KW-0472">Membrane</keyword>
<keyword id="KW-0505">Motor protein</keyword>
<keyword id="KW-0518">Myosin</keyword>
<keyword id="KW-1010">Non-syndromic deafness</keyword>
<keyword id="KW-0547">Nucleotide-binding</keyword>
<keyword id="KW-0539">Nucleus</keyword>
<keyword id="KW-0597">Phosphoprotein</keyword>
<keyword id="KW-0653">Protein transport</keyword>
<keyword id="KW-1267">Proteomics identification</keyword>
<keyword id="KW-1185">Reference proteome</keyword>
<keyword id="KW-0813">Transport</keyword>
<name>MYO6_HUMAN</name>
<sequence length="1294" mass="149691">MEDGKPVWAPHPTDGFQMGNIVDIGPDSLTIEPLNQKGKTFLALINQVFPAEEDSKKDVEDNCSLMYLNEATLLHNIKVRYSKDRIYTYVANILIAVNPYFDIPKIYSSEAIKSYQGKSLGTRPPHVFAIADKAFRDMKVLKMSQSIIVSGESGAGKTENTKFVLRYLTESYGTGQDIDDRIVEANPLLEAFGNAKTVRNNNSSRFGKFVEIHFNEKSSVVGGFVSHYLLEKSRICVQGKEERNYHIFYRLCAGASEDIREKLHLSSPDNFRYLNRGCTRYFANKETDKQILQNRKSPEYLKAGSMKDPLLDDHGDFIRMCTAMKKIGLDDEEKLDLFRVVAGVLHLGNIDFEEAGSTSGGCNLKNKSAQSLEYCAELLGLDQDDLRVSLTTRVMLTTAGGTKGTVIKVPLKVEQANNARDALAKTVYSHLFDHVVNRVNQCFPFETSSYFIGVLDIAGFEYFEHNSFEQFCINYCNEKLQQFFNERILKEEQELYQKEGLGVNEVHYVDNQDCIDLIEAKLVGILDILDEENRLPQPSDQHFTSAVHQKHKDHFRLTIPRKSKLAVHRNIRDDEGFIIRHFAGAVCYETTQFVEKNNDALHMSLESLICESRDKFIRELFESSTNNNKDTKQKAGKLSFISVGNKFKTQLNLLLDKLRSTGASFIRCIKPNLKMTSHHFEGAQILSQLQCSGMVSVLDLMQGGYPSRASFHELYNMYKKYMPDKLARLDPRLFCKALFKALGLNENDYKFGLTKVFFRPGKFAEFDQIMKSDPDHLAELVKRVNHWLTCSRWKKVQWCSLSVIKLKNKIKYRAEACIKMQKTIRMWLCKRRHKPRIDGLVKVGTLKKRLDKFNEVVSVLKDGKPEMNKQIKNLEISIDTLMAKIKSTMMTQEQIQKEYDALVKSSEELLSALQKKKQQEEEAERLRRIQEEMEKERKRREEDEKRRRKEEEERRMKLEMEAKRKQEEEERKKREDDEKRIQAEVEAQLARQKEEESQQQAVLEQERRDRELALRIAQSEAELISDEAQADLALRRSLDSYPVSKNDGTRPKMTPEQMAKEMSEFLSRGPAVLATKAAAGTKKYDLSKWKYAELRDTINTSCDIELLAACREEFHRRLKVYHAWKSKNKKRNTETEQRAPKSVTDYDFAPFLNNSPQQNPAAQIPARQREIEMNRQQRFFRIPFIRPADQYKDPQSKKKGWWYAHFDGPWIARQMELHPDKPPILLVAGKDDMEMCELNLEETGLTRKRGAEILPRQFEEIWERCGGIQYLQNAIESRQARPTYATAMLQSLLK</sequence>
<evidence type="ECO:0000250" key="1">
    <source>
        <dbReference type="UniProtKB" id="E1BPK6"/>
    </source>
</evidence>
<evidence type="ECO:0000250" key="2">
    <source>
        <dbReference type="UniProtKB" id="Q29122"/>
    </source>
</evidence>
<evidence type="ECO:0000250" key="3">
    <source>
        <dbReference type="UniProtKB" id="Q64331"/>
    </source>
</evidence>
<evidence type="ECO:0000250" key="4">
    <source>
        <dbReference type="UniProtKB" id="Q9I8D1"/>
    </source>
</evidence>
<evidence type="ECO:0000255" key="5"/>
<evidence type="ECO:0000255" key="6">
    <source>
        <dbReference type="PROSITE-ProRule" id="PRU00782"/>
    </source>
</evidence>
<evidence type="ECO:0000255" key="7">
    <source>
        <dbReference type="PROSITE-ProRule" id="PRU01190"/>
    </source>
</evidence>
<evidence type="ECO:0000256" key="8">
    <source>
        <dbReference type="SAM" id="MobiDB-lite"/>
    </source>
</evidence>
<evidence type="ECO:0000269" key="9">
    <source>
    </source>
</evidence>
<evidence type="ECO:0000269" key="10">
    <source>
    </source>
</evidence>
<evidence type="ECO:0000269" key="11">
    <source>
    </source>
</evidence>
<evidence type="ECO:0000269" key="12">
    <source>
    </source>
</evidence>
<evidence type="ECO:0000269" key="13">
    <source>
    </source>
</evidence>
<evidence type="ECO:0000269" key="14">
    <source>
    </source>
</evidence>
<evidence type="ECO:0000269" key="15">
    <source>
    </source>
</evidence>
<evidence type="ECO:0000269" key="16">
    <source>
    </source>
</evidence>
<evidence type="ECO:0000269" key="17">
    <source>
    </source>
</evidence>
<evidence type="ECO:0000269" key="18">
    <source>
    </source>
</evidence>
<evidence type="ECO:0000269" key="19">
    <source>
    </source>
</evidence>
<evidence type="ECO:0000269" key="20">
    <source>
    </source>
</evidence>
<evidence type="ECO:0000269" key="21">
    <source>
    </source>
</evidence>
<evidence type="ECO:0000269" key="22">
    <source>
    </source>
</evidence>
<evidence type="ECO:0000269" key="23">
    <source>
    </source>
</evidence>
<evidence type="ECO:0000269" key="24">
    <source>
    </source>
</evidence>
<evidence type="ECO:0000303" key="25">
    <source>
    </source>
</evidence>
<evidence type="ECO:0000303" key="26">
    <source>
    </source>
</evidence>
<evidence type="ECO:0000303" key="27">
    <source>
    </source>
</evidence>
<evidence type="ECO:0000303" key="28">
    <source>
    </source>
</evidence>
<evidence type="ECO:0000305" key="29"/>
<evidence type="ECO:0000312" key="30">
    <source>
        <dbReference type="HGNC" id="HGNC:7605"/>
    </source>
</evidence>
<evidence type="ECO:0007744" key="31">
    <source>
        <dbReference type="PDB" id="6J56"/>
    </source>
</evidence>
<evidence type="ECO:0007744" key="32">
    <source>
    </source>
</evidence>
<evidence type="ECO:0007744" key="33">
    <source>
    </source>
</evidence>
<evidence type="ECO:0007829" key="34">
    <source>
        <dbReference type="PDB" id="2N0Z"/>
    </source>
</evidence>
<evidence type="ECO:0007829" key="35">
    <source>
        <dbReference type="PDB" id="2N11"/>
    </source>
</evidence>
<evidence type="ECO:0007829" key="36">
    <source>
        <dbReference type="PDB" id="6E5N"/>
    </source>
</evidence>
<evidence type="ECO:0007829" key="37">
    <source>
        <dbReference type="PDB" id="6J56"/>
    </source>
</evidence>
<reference key="1">
    <citation type="journal article" date="1997" name="Hum. Mol. Genet.">
        <title>Characterization of unconventional MYO6, the human homologue of the gene responsible for deafness in Snell's waltzer mice.</title>
        <authorList>
            <person name="Avraham K.B."/>
            <person name="Hasson T."/>
            <person name="Sobe T."/>
            <person name="Balsara B."/>
            <person name="Testa J.R."/>
            <person name="Skvorak A.B."/>
            <person name="Morton C.C."/>
            <person name="Copeland N.G."/>
            <person name="Jenkins N.A."/>
        </authorList>
    </citation>
    <scope>NUCLEOTIDE SEQUENCE [MRNA] (ISOFORM 2)</scope>
    <scope>TISSUE SPECIFICITY</scope>
    <source>
        <tissue>Brain</tissue>
    </source>
</reference>
<reference key="2">
    <citation type="submission" date="2000-07" db="EMBL/GenBank/DDBJ databases">
        <authorList>
            <person name="Avraham K.B."/>
        </authorList>
    </citation>
    <scope>SEQUENCE REVISION</scope>
</reference>
<reference key="3">
    <citation type="submission" date="2000-01" db="EMBL/GenBank/DDBJ databases">
        <title>Genomic organization of the human myosin VI gene (MYO6), a candidate gene for neurosensory and storage disorders.</title>
        <authorList>
            <person name="Kuehn M.H."/>
            <person name="Hageman G.S."/>
        </authorList>
    </citation>
    <scope>NUCLEOTIDE SEQUENCE [GENOMIC DNA]</scope>
</reference>
<reference key="4">
    <citation type="journal article" date="1997" name="DNA Res.">
        <title>Prediction of the coding sequences of unidentified human genes. VII. The complete sequences of 100 new cDNA clones from brain which can code for large proteins in vitro.</title>
        <authorList>
            <person name="Nagase T."/>
            <person name="Ishikawa K."/>
            <person name="Nakajima D."/>
            <person name="Ohira M."/>
            <person name="Seki N."/>
            <person name="Miyajima N."/>
            <person name="Tanaka A."/>
            <person name="Kotani H."/>
            <person name="Nomura N."/>
            <person name="Ohara O."/>
        </authorList>
    </citation>
    <scope>NUCLEOTIDE SEQUENCE [LARGE SCALE MRNA] (ISOFORM 1)</scope>
    <source>
        <tissue>Brain</tissue>
    </source>
</reference>
<reference key="5">
    <citation type="journal article" date="2003" name="Nature">
        <title>The DNA sequence and analysis of human chromosome 6.</title>
        <authorList>
            <person name="Mungall A.J."/>
            <person name="Palmer S.A."/>
            <person name="Sims S.K."/>
            <person name="Edwards C.A."/>
            <person name="Ashurst J.L."/>
            <person name="Wilming L."/>
            <person name="Jones M.C."/>
            <person name="Horton R."/>
            <person name="Hunt S.E."/>
            <person name="Scott C.E."/>
            <person name="Gilbert J.G.R."/>
            <person name="Clamp M.E."/>
            <person name="Bethel G."/>
            <person name="Milne S."/>
            <person name="Ainscough R."/>
            <person name="Almeida J.P."/>
            <person name="Ambrose K.D."/>
            <person name="Andrews T.D."/>
            <person name="Ashwell R.I.S."/>
            <person name="Babbage A.K."/>
            <person name="Bagguley C.L."/>
            <person name="Bailey J."/>
            <person name="Banerjee R."/>
            <person name="Barker D.J."/>
            <person name="Barlow K.F."/>
            <person name="Bates K."/>
            <person name="Beare D.M."/>
            <person name="Beasley H."/>
            <person name="Beasley O."/>
            <person name="Bird C.P."/>
            <person name="Blakey S.E."/>
            <person name="Bray-Allen S."/>
            <person name="Brook J."/>
            <person name="Brown A.J."/>
            <person name="Brown J.Y."/>
            <person name="Burford D.C."/>
            <person name="Burrill W."/>
            <person name="Burton J."/>
            <person name="Carder C."/>
            <person name="Carter N.P."/>
            <person name="Chapman J.C."/>
            <person name="Clark S.Y."/>
            <person name="Clark G."/>
            <person name="Clee C.M."/>
            <person name="Clegg S."/>
            <person name="Cobley V."/>
            <person name="Collier R.E."/>
            <person name="Collins J.E."/>
            <person name="Colman L.K."/>
            <person name="Corby N.R."/>
            <person name="Coville G.J."/>
            <person name="Culley K.M."/>
            <person name="Dhami P."/>
            <person name="Davies J."/>
            <person name="Dunn M."/>
            <person name="Earthrowl M.E."/>
            <person name="Ellington A.E."/>
            <person name="Evans K.A."/>
            <person name="Faulkner L."/>
            <person name="Francis M.D."/>
            <person name="Frankish A."/>
            <person name="Frankland J."/>
            <person name="French L."/>
            <person name="Garner P."/>
            <person name="Garnett J."/>
            <person name="Ghori M.J."/>
            <person name="Gilby L.M."/>
            <person name="Gillson C.J."/>
            <person name="Glithero R.J."/>
            <person name="Grafham D.V."/>
            <person name="Grant M."/>
            <person name="Gribble S."/>
            <person name="Griffiths C."/>
            <person name="Griffiths M.N.D."/>
            <person name="Hall R."/>
            <person name="Halls K.S."/>
            <person name="Hammond S."/>
            <person name="Harley J.L."/>
            <person name="Hart E.A."/>
            <person name="Heath P.D."/>
            <person name="Heathcott R."/>
            <person name="Holmes S.J."/>
            <person name="Howden P.J."/>
            <person name="Howe K.L."/>
            <person name="Howell G.R."/>
            <person name="Huckle E."/>
            <person name="Humphray S.J."/>
            <person name="Humphries M.D."/>
            <person name="Hunt A.R."/>
            <person name="Johnson C.M."/>
            <person name="Joy A.A."/>
            <person name="Kay M."/>
            <person name="Keenan S.J."/>
            <person name="Kimberley A.M."/>
            <person name="King A."/>
            <person name="Laird G.K."/>
            <person name="Langford C."/>
            <person name="Lawlor S."/>
            <person name="Leongamornlert D.A."/>
            <person name="Leversha M."/>
            <person name="Lloyd C.R."/>
            <person name="Lloyd D.M."/>
            <person name="Loveland J.E."/>
            <person name="Lovell J."/>
            <person name="Martin S."/>
            <person name="Mashreghi-Mohammadi M."/>
            <person name="Maslen G.L."/>
            <person name="Matthews L."/>
            <person name="McCann O.T."/>
            <person name="McLaren S.J."/>
            <person name="McLay K."/>
            <person name="McMurray A."/>
            <person name="Moore M.J.F."/>
            <person name="Mullikin J.C."/>
            <person name="Niblett D."/>
            <person name="Nickerson T."/>
            <person name="Novik K.L."/>
            <person name="Oliver K."/>
            <person name="Overton-Larty E.K."/>
            <person name="Parker A."/>
            <person name="Patel R."/>
            <person name="Pearce A.V."/>
            <person name="Peck A.I."/>
            <person name="Phillimore B.J.C.T."/>
            <person name="Phillips S."/>
            <person name="Plumb R.W."/>
            <person name="Porter K.M."/>
            <person name="Ramsey Y."/>
            <person name="Ranby S.A."/>
            <person name="Rice C.M."/>
            <person name="Ross M.T."/>
            <person name="Searle S.M."/>
            <person name="Sehra H.K."/>
            <person name="Sheridan E."/>
            <person name="Skuce C.D."/>
            <person name="Smith S."/>
            <person name="Smith M."/>
            <person name="Spraggon L."/>
            <person name="Squares S.L."/>
            <person name="Steward C.A."/>
            <person name="Sycamore N."/>
            <person name="Tamlyn-Hall G."/>
            <person name="Tester J."/>
            <person name="Theaker A.J."/>
            <person name="Thomas D.W."/>
            <person name="Thorpe A."/>
            <person name="Tracey A."/>
            <person name="Tromans A."/>
            <person name="Tubby B."/>
            <person name="Wall M."/>
            <person name="Wallis J.M."/>
            <person name="West A.P."/>
            <person name="White S.S."/>
            <person name="Whitehead S.L."/>
            <person name="Whittaker H."/>
            <person name="Wild A."/>
            <person name="Willey D.J."/>
            <person name="Wilmer T.E."/>
            <person name="Wood J.M."/>
            <person name="Wray P.W."/>
            <person name="Wyatt J.C."/>
            <person name="Young L."/>
            <person name="Younger R.M."/>
            <person name="Bentley D.R."/>
            <person name="Coulson A."/>
            <person name="Durbin R.M."/>
            <person name="Hubbard T."/>
            <person name="Sulston J.E."/>
            <person name="Dunham I."/>
            <person name="Rogers J."/>
            <person name="Beck S."/>
        </authorList>
    </citation>
    <scope>NUCLEOTIDE SEQUENCE [LARGE SCALE GENOMIC DNA] (ISOFORMS 1; 2 AND 5)</scope>
</reference>
<reference key="6">
    <citation type="submission" date="2005-09" db="EMBL/GenBank/DDBJ databases">
        <authorList>
            <person name="Mural R.J."/>
            <person name="Istrail S."/>
            <person name="Sutton G.G."/>
            <person name="Florea L."/>
            <person name="Halpern A.L."/>
            <person name="Mobarry C.M."/>
            <person name="Lippert R."/>
            <person name="Walenz B."/>
            <person name="Shatkay H."/>
            <person name="Dew I."/>
            <person name="Miller J.R."/>
            <person name="Flanigan M.J."/>
            <person name="Edwards N.J."/>
            <person name="Bolanos R."/>
            <person name="Fasulo D."/>
            <person name="Halldorsson B.V."/>
            <person name="Hannenhalli S."/>
            <person name="Turner R."/>
            <person name="Yooseph S."/>
            <person name="Lu F."/>
            <person name="Nusskern D.R."/>
            <person name="Shue B.C."/>
            <person name="Zheng X.H."/>
            <person name="Zhong F."/>
            <person name="Delcher A.L."/>
            <person name="Huson D.H."/>
            <person name="Kravitz S.A."/>
            <person name="Mouchard L."/>
            <person name="Reinert K."/>
            <person name="Remington K.A."/>
            <person name="Clark A.G."/>
            <person name="Waterman M.S."/>
            <person name="Eichler E.E."/>
            <person name="Adams M.D."/>
            <person name="Hunkapiller M.W."/>
            <person name="Myers E.W."/>
            <person name="Venter J.C."/>
        </authorList>
    </citation>
    <scope>NUCLEOTIDE SEQUENCE [LARGE SCALE GENOMIC DNA]</scope>
</reference>
<reference key="7">
    <citation type="journal article" date="2004" name="Genome Res.">
        <title>The status, quality, and expansion of the NIH full-length cDNA project: the Mammalian Gene Collection (MGC).</title>
        <authorList>
            <consortium name="The MGC Project Team"/>
        </authorList>
    </citation>
    <scope>NUCLEOTIDE SEQUENCE [LARGE SCALE MRNA] (ISOFORM 1)</scope>
</reference>
<reference key="8">
    <citation type="journal article" date="2006" name="Genome Res.">
        <title>Diversification of transcriptional modulation: large-scale identification and characterization of putative alternative promoters of human genes.</title>
        <authorList>
            <person name="Kimura K."/>
            <person name="Wakamatsu A."/>
            <person name="Suzuki Y."/>
            <person name="Ota T."/>
            <person name="Nishikawa T."/>
            <person name="Yamashita R."/>
            <person name="Yamamoto J."/>
            <person name="Sekine M."/>
            <person name="Tsuritani K."/>
            <person name="Wakaguri H."/>
            <person name="Ishii S."/>
            <person name="Sugiyama T."/>
            <person name="Saito K."/>
            <person name="Isono Y."/>
            <person name="Irie R."/>
            <person name="Kushida N."/>
            <person name="Yoneyama T."/>
            <person name="Otsuka R."/>
            <person name="Kanda K."/>
            <person name="Yokoi T."/>
            <person name="Kondo H."/>
            <person name="Wagatsuma M."/>
            <person name="Murakawa K."/>
            <person name="Ishida S."/>
            <person name="Ishibashi T."/>
            <person name="Takahashi-Fujii A."/>
            <person name="Tanase T."/>
            <person name="Nagai K."/>
            <person name="Kikuchi H."/>
            <person name="Nakai K."/>
            <person name="Isogai T."/>
            <person name="Sugano S."/>
        </authorList>
    </citation>
    <scope>NUCLEOTIDE SEQUENCE [LARGE SCALE MRNA] OF 1102-1294 (ISOFORM 6)</scope>
    <source>
        <tissue>Salivary gland</tissue>
    </source>
</reference>
<reference key="9">
    <citation type="journal article" date="1998" name="J. Cell Biol.">
        <title>The localization of myosin VI at the Golgi complex and leading edge of fibroblasts and its phosphorylation and recruitment into membrane ruffles of A431 cells after growth factor stimulation.</title>
        <authorList>
            <person name="Buss F."/>
            <person name="Kendrick-Jones J."/>
            <person name="Lionne C."/>
            <person name="Knight A.E."/>
            <person name="Cote G.P."/>
            <person name="Paul Luzio J."/>
        </authorList>
    </citation>
    <scope>SUBCELLULAR LOCATION</scope>
    <scope>PHOSPHORYLATION BY PAK</scope>
    <source>
        <tissue>Intestine</tissue>
    </source>
</reference>
<reference key="10">
    <citation type="journal article" date="1999" name="Nature">
        <title>Myosin VI is an actin-based motor that moves backwards.</title>
        <authorList>
            <person name="Wells A.L."/>
            <person name="Lin A.W."/>
            <person name="Chen L.-Q."/>
            <person name="Safer D."/>
            <person name="Cain S.M."/>
            <person name="Hasson T."/>
            <person name="Carragher B.O."/>
            <person name="Milligan R.A."/>
            <person name="Sweeney H.L."/>
        </authorList>
    </citation>
    <scope>FUNCTION</scope>
</reference>
<reference key="11">
    <citation type="journal article" date="2001" name="EMBO J.">
        <title>Myosin VI isoform localized to clathrin-coated vesicles with a role in clathrin-mediated endocytosis.</title>
        <authorList>
            <person name="Buss F."/>
            <person name="Arden S.D."/>
            <person name="Lindsay M."/>
            <person name="Luzio J.P."/>
            <person name="Kendrick-Jones J."/>
        </authorList>
    </citation>
    <scope>FUNCTION IN ENDOCYTOSIS</scope>
    <scope>SUBCELLULAR LOCATION</scope>
    <scope>ALTERNATIVE SPLICING</scope>
</reference>
<reference key="12">
    <citation type="journal article" date="2002" name="Traffic">
        <title>Myosin VI binds to and localises with Dab2, potentially linking receptor-mediated endocytosis and the actin cytoskeleton.</title>
        <authorList>
            <person name="Morris S.M."/>
            <person name="Arden S.D."/>
            <person name="Roberts R.C."/>
            <person name="Kendrick-Jones J."/>
            <person name="Cooper J.A."/>
            <person name="Luzio J.P."/>
            <person name="Buss F."/>
        </authorList>
    </citation>
    <scope>INTERACTION WITH DAB2</scope>
    <scope>SUBCELLULAR LOCATION</scope>
</reference>
<reference key="13">
    <citation type="journal article" date="2004" name="J. Biol. Chem.">
        <title>Myosin VI regulates endocytosis of the cystic fibrosis transmembrane conductance regulator.</title>
        <authorList>
            <person name="Swiatecka-Urban A."/>
            <person name="Boyd C."/>
            <person name="Coutermarsh B."/>
            <person name="Karlson K.H."/>
            <person name="Barnaby R."/>
            <person name="Aschenbrenner L."/>
            <person name="Langford G.M."/>
            <person name="Hasson T."/>
            <person name="Stanton B.A."/>
        </authorList>
    </citation>
    <scope>INTERACTION WITH CFTR</scope>
</reference>
<reference key="14">
    <citation type="journal article" date="2004" name="EMBO J.">
        <title>A monomeric myosin VI with a large working stroke.</title>
        <authorList>
            <person name="Lister I."/>
            <person name="Schmitz S."/>
            <person name="Walker M."/>
            <person name="Trinick J."/>
            <person name="Buss F."/>
            <person name="Veigel C."/>
            <person name="Kendrick-Jones J."/>
        </authorList>
    </citation>
    <scope>SUBUNIT</scope>
</reference>
<reference key="15">
    <citation type="journal article" date="2006" name="Mol. Cell">
        <title>Nuclear myosin VI enhances RNA polymerase II-dependent transcription.</title>
        <authorList>
            <person name="Vreugde S."/>
            <person name="Ferrai C."/>
            <person name="Miluzio A."/>
            <person name="Hauben E."/>
            <person name="Marchisio P.C."/>
            <person name="Crippa M.P."/>
            <person name="Bussi M."/>
            <person name="Biffo S."/>
        </authorList>
    </citation>
    <scope>FUNCTION</scope>
    <scope>SUBCELLULAR LOCATION</scope>
</reference>
<reference key="16">
    <citation type="journal article" date="2006" name="Mol. Cell. Biol.">
        <title>Myosin VI is a mediator of the p53-dependent cell survival pathway.</title>
        <authorList>
            <person name="Jung E.J."/>
            <person name="Liu G."/>
            <person name="Zhou W."/>
            <person name="Chen X."/>
        </authorList>
    </citation>
    <scope>FUNCTION</scope>
    <scope>SUBCELLULAR LOCATION</scope>
</reference>
<reference key="17">
    <citation type="journal article" date="2008" name="Nat. Struct. Mol. Biol.">
        <title>Long single alpha-helical tail domains bridge the gap between structure and function of myosin VI.</title>
        <authorList>
            <person name="Spink B.J."/>
            <person name="Sivaramakrishnan S."/>
            <person name="Lipfert J."/>
            <person name="Doniach S."/>
            <person name="Spudich J.A."/>
        </authorList>
    </citation>
    <scope>SAH DOMAIN</scope>
</reference>
<reference key="18">
    <citation type="journal article" date="2011" name="BMC Syst. Biol.">
        <title>Initial characterization of the human central proteome.</title>
        <authorList>
            <person name="Burkard T.R."/>
            <person name="Planyavsky M."/>
            <person name="Kaupe I."/>
            <person name="Breitwieser F.P."/>
            <person name="Buerckstuemmer T."/>
            <person name="Bennett K.L."/>
            <person name="Superti-Furga G."/>
            <person name="Colinge J."/>
        </authorList>
    </citation>
    <scope>IDENTIFICATION BY MASS SPECTROMETRY [LARGE SCALE ANALYSIS]</scope>
</reference>
<reference key="19">
    <citation type="journal article" date="2012" name="Nat. Cell Biol.">
        <title>Autophagy receptors link myosin VI to autophagosomes to mediate Tom1-dependent autophagosome maturation and fusion with the lysosome.</title>
        <authorList>
            <person name="Tumbarello D.A."/>
            <person name="Waxse B.J."/>
            <person name="Arden S.D."/>
            <person name="Bright N.A."/>
            <person name="Kendrick-Jones J."/>
            <person name="Buss F."/>
        </authorList>
    </citation>
    <scope>FUNCTION</scope>
    <scope>SUBCELLULAR LOCATION</scope>
    <scope>INTERACTION WITH TOM1 AND TOM1L2</scope>
    <scope>MUTAGENESIS OF 1116-ARG--LEU-1118</scope>
</reference>
<reference key="20">
    <citation type="journal article" date="2013" name="J. Proteome Res.">
        <title>Toward a comprehensive characterization of a human cancer cell phosphoproteome.</title>
        <authorList>
            <person name="Zhou H."/>
            <person name="Di Palma S."/>
            <person name="Preisinger C."/>
            <person name="Peng M."/>
            <person name="Polat A.N."/>
            <person name="Heck A.J."/>
            <person name="Mohammed S."/>
        </authorList>
    </citation>
    <scope>PHOSPHORYLATION [LARGE SCALE ANALYSIS] AT SER-267 AND THR-405</scope>
    <scope>IDENTIFICATION BY MASS SPECTROMETRY [LARGE SCALE ANALYSIS]</scope>
    <source>
        <tissue>Cervix carcinoma</tissue>
        <tissue>Erythroleukemia</tissue>
    </source>
</reference>
<reference key="21">
    <citation type="journal article" date="2014" name="J. Proteomics">
        <title>An enzyme assisted RP-RPLC approach for in-depth analysis of human liver phosphoproteome.</title>
        <authorList>
            <person name="Bian Y."/>
            <person name="Song C."/>
            <person name="Cheng K."/>
            <person name="Dong M."/>
            <person name="Wang F."/>
            <person name="Huang J."/>
            <person name="Sun D."/>
            <person name="Wang L."/>
            <person name="Ye M."/>
            <person name="Zou H."/>
        </authorList>
    </citation>
    <scope>PHOSPHORYLATION [LARGE SCALE ANALYSIS] AT THR-405</scope>
    <scope>IDENTIFICATION BY MASS SPECTROMETRY [LARGE SCALE ANALYSIS]</scope>
    <source>
        <tissue>Liver</tissue>
    </source>
</reference>
<reference key="22">
    <citation type="journal article" date="2018" name="EMBO Rep.">
        <title>The MYO6 interactome reveals adaptor complexes coordinating early endosome and cytoskeletal dynamics.</title>
        <authorList>
            <person name="O'Loughlin T."/>
            <person name="Masters T.A."/>
            <person name="Buss F."/>
        </authorList>
    </citation>
    <scope>FUNCTION</scope>
    <scope>IDENTIFICATION IN DISP COMPLEX</scope>
</reference>
<reference key="23">
    <citation type="journal article" date="2001" name="Am. J. Hum. Genet.">
        <title>MYO6, the human homologue of the gene responsible for deafness in Snell's waltzer mice, is mutated in autosomal dominant nonsyndromic hearing loss.</title>
        <authorList>
            <person name="Melchionda S."/>
            <person name="Ahituv N."/>
            <person name="Bisceglia L."/>
            <person name="Sobe T."/>
            <person name="Glaser F."/>
            <person name="Rabionet R."/>
            <person name="Arbones M.L."/>
            <person name="Notarangelo A."/>
            <person name="Di Iorio E."/>
            <person name="Carella M."/>
            <person name="Zelante L."/>
            <person name="Estivill X."/>
            <person name="Avraham K.B."/>
            <person name="Gasparini P."/>
        </authorList>
    </citation>
    <scope>VARIANT DFNA22 TYR-442</scope>
</reference>
<reference key="24">
    <citation type="journal article" date="2003" name="Am. J. Hum. Genet.">
        <title>Mutations of MYO6 are associated with recessive deafness, DFNB37.</title>
        <authorList>
            <person name="Ahmed Z.M."/>
            <person name="Morell R.J."/>
            <person name="Riazuddin S."/>
            <person name="Gropman A."/>
            <person name="Shaukat S."/>
            <person name="Ahmad M.M."/>
            <person name="Mohiddin S.A."/>
            <person name="Fananapazir L."/>
            <person name="Caruso R.C."/>
            <person name="Husnain T."/>
            <person name="Khan S.N."/>
            <person name="Riazuddin S."/>
            <person name="Griffith A.J."/>
            <person name="Friedman T.B."/>
            <person name="Wilcox E.R."/>
        </authorList>
    </citation>
    <scope>VARIANT DFNB37 VAL-216</scope>
</reference>
<reference key="25">
    <citation type="journal article" date="2004" name="J. Med. Genet.">
        <title>Novel association of hypertrophic cardiomyopathy, sensorineural deafness, and a mutation in unconventional myosin VI (MYO6).</title>
        <authorList>
            <person name="Mohiddin S.A."/>
            <person name="Ahmed Z.M."/>
            <person name="Griffith A.J."/>
            <person name="Tripodi D."/>
            <person name="Friedman T.B."/>
            <person name="Fananapazir L."/>
            <person name="Morell R.J."/>
        </authorList>
    </citation>
    <scope>VARIANT DFNHCM ARG-246</scope>
</reference>
<reference evidence="31" key="26">
    <citation type="journal article" date="2019" name="Nat. Commun.">
        <title>Structure of Myosin VI/Tom1 complex reveals a cargo recognition mode of Myosin VI for tethering.</title>
        <authorList>
            <person name="Hu S."/>
            <person name="Guo Y."/>
            <person name="Wang Y."/>
            <person name="Li Y."/>
            <person name="Fu T."/>
            <person name="Zhou Z."/>
            <person name="Wang Y."/>
            <person name="Liu J."/>
            <person name="Pan L."/>
        </authorList>
    </citation>
    <scope>X-RAY CRYSTALLOGRAPHY (1.80 ANGSTROMS) OF 1166-1294 IN COMPLEX WITH TOM1</scope>
    <scope>FUNCTION</scope>
    <scope>INTERACTION WITH TOM1; TAX1BP1; CALCOCO2/NDP52 AND OPTN</scope>
</reference>
<feature type="chain" id="PRO_0000123464" description="Unconventional myosin-VI">
    <location>
        <begin position="1"/>
        <end position="1294"/>
    </location>
</feature>
<feature type="domain" description="Myosin N-terminal SH3-like" evidence="7">
    <location>
        <begin position="2"/>
        <end position="53"/>
    </location>
</feature>
<feature type="domain" description="Myosin motor" evidence="6">
    <location>
        <begin position="57"/>
        <end position="771"/>
    </location>
</feature>
<feature type="domain" description="IQ" evidence="2">
    <location>
        <begin position="814"/>
        <end position="834"/>
    </location>
</feature>
<feature type="region of interest" description="Responsible for slow ATPase activity" evidence="2">
    <location>
        <begin position="273"/>
        <end position="317"/>
    </location>
</feature>
<feature type="region of interest" description="Actin-binding" evidence="5">
    <location>
        <begin position="665"/>
        <end position="672"/>
    </location>
</feature>
<feature type="region of interest" description="Required for binding calmodulin" evidence="2">
    <location>
        <begin position="782"/>
        <end position="810"/>
    </location>
</feature>
<feature type="region of interest" description="Three-helix bundle" evidence="2">
    <location>
        <begin position="835"/>
        <end position="916"/>
    </location>
</feature>
<feature type="region of interest" description="SAH" evidence="19">
    <location>
        <begin position="917"/>
        <end position="984"/>
    </location>
</feature>
<feature type="region of interest" description="Disordered" evidence="8">
    <location>
        <begin position="934"/>
        <end position="955"/>
    </location>
</feature>
<feature type="region of interest" description="Interaction with TAX1BP1 and CALCOCO2/NDP52" evidence="22">
    <location>
        <begin position="1060"/>
        <end position="1285"/>
    </location>
</feature>
<feature type="region of interest" description="Interaction with OPTN" evidence="4">
    <location>
        <begin position="1116"/>
        <end position="1118"/>
    </location>
</feature>
<feature type="region of interest" description="Interaction with TOM1" evidence="22">
    <location>
        <begin position="1157"/>
        <end position="1285"/>
    </location>
</feature>
<feature type="binding site" evidence="5">
    <location>
        <begin position="151"/>
        <end position="158"/>
    </location>
    <ligand>
        <name>ATP</name>
        <dbReference type="ChEBI" id="CHEBI:30616"/>
    </ligand>
</feature>
<feature type="modified residue" description="Phosphoserine" evidence="32">
    <location>
        <position position="267"/>
    </location>
</feature>
<feature type="modified residue" description="Phosphothreonine" evidence="32 33">
    <location>
        <position position="405"/>
    </location>
</feature>
<feature type="modified residue" description="Phosphoserine" evidence="3">
    <location>
        <position position="604"/>
    </location>
</feature>
<feature type="modified residue" description="Phosphoserine" evidence="3">
    <location>
        <position position="1025"/>
    </location>
</feature>
<feature type="modified residue" description="Phosphoserine" evidence="3">
    <location>
        <position position="1155"/>
    </location>
</feature>
<feature type="splice variant" id="VSP_007985" description="In isoform 2 and isoform 5." evidence="28">
    <location>
        <begin position="1037"/>
        <end position="1068"/>
    </location>
</feature>
<feature type="splice variant" id="VSP_022332" description="In isoform 1." evidence="25 27">
    <location>
        <begin position="1037"/>
        <end position="1045"/>
    </location>
</feature>
<feature type="splice variant" id="VSP_042208" description="In isoform 6." evidence="26">
    <original>DFAPFLNNSP</original>
    <variation>A</variation>
    <location>
        <begin position="1147"/>
        <end position="1156"/>
    </location>
</feature>
<feature type="splice variant" id="VSP_022333" description="In isoform 4 and isoform 5." evidence="29">
    <location>
        <begin position="1147"/>
        <end position="1155"/>
    </location>
</feature>
<feature type="sequence variant" id="VAR_016209" description="In DFNB37; dbSNP:rs121912559." evidence="13">
    <original>E</original>
    <variation>V</variation>
    <location>
        <position position="216"/>
    </location>
</feature>
<feature type="sequence variant" id="VAR_029988" description="In DFNHCM; dbSNP:rs121912560." evidence="15">
    <original>H</original>
    <variation>R</variation>
    <location>
        <position position="246"/>
    </location>
</feature>
<feature type="sequence variant" id="VAR_012110" description="In DFNA22." evidence="11">
    <original>C</original>
    <variation>Y</variation>
    <location>
        <position position="442"/>
    </location>
</feature>
<feature type="mutagenesis site" description="Decreased localization to autophagosomes." evidence="20">
    <original>RRL</original>
    <variation>AAA</variation>
    <location>
        <begin position="1116"/>
        <end position="1118"/>
    </location>
</feature>
<feature type="helix" evidence="35">
    <location>
        <begin position="999"/>
        <end position="1022"/>
    </location>
</feature>
<feature type="helix" evidence="35">
    <location>
        <begin position="1026"/>
        <end position="1036"/>
    </location>
</feature>
<feature type="helix" evidence="35">
    <location>
        <begin position="1038"/>
        <end position="1040"/>
    </location>
</feature>
<feature type="helix" evidence="35">
    <location>
        <begin position="1055"/>
        <end position="1066"/>
    </location>
</feature>
<feature type="helix" evidence="36">
    <location>
        <begin position="1076"/>
        <end position="1078"/>
    </location>
</feature>
<feature type="turn" evidence="36">
    <location>
        <begin position="1079"/>
        <end position="1083"/>
    </location>
</feature>
<feature type="helix" evidence="34">
    <location>
        <begin position="1091"/>
        <end position="1100"/>
    </location>
</feature>
<feature type="helix" evidence="34">
    <location>
        <begin position="1104"/>
        <end position="1118"/>
    </location>
</feature>
<feature type="helix" evidence="37">
    <location>
        <begin position="1168"/>
        <end position="1172"/>
    </location>
</feature>
<feature type="strand" evidence="37">
    <location>
        <begin position="1177"/>
        <end position="1183"/>
    </location>
</feature>
<feature type="strand" evidence="37">
    <location>
        <begin position="1201"/>
        <end position="1207"/>
    </location>
</feature>
<feature type="strand" evidence="37">
    <location>
        <begin position="1210"/>
        <end position="1217"/>
    </location>
</feature>
<feature type="strand" evidence="37">
    <location>
        <begin position="1224"/>
        <end position="1227"/>
    </location>
</feature>
<feature type="helix" evidence="37">
    <location>
        <begin position="1232"/>
        <end position="1234"/>
    </location>
</feature>
<feature type="helix" evidence="37">
    <location>
        <begin position="1240"/>
        <end position="1243"/>
    </location>
</feature>
<feature type="helix" evidence="37">
    <location>
        <begin position="1245"/>
        <end position="1247"/>
    </location>
</feature>
<feature type="helix" evidence="37">
    <location>
        <begin position="1255"/>
        <end position="1264"/>
    </location>
</feature>
<feature type="helix" evidence="37">
    <location>
        <begin position="1267"/>
        <end position="1276"/>
    </location>
</feature>
<feature type="helix" evidence="37">
    <location>
        <begin position="1284"/>
        <end position="1289"/>
    </location>
</feature>
<accession>Q9UM54</accession>
<accession>A6H8V4</accession>
<accession>E1P540</accession>
<accession>Q5TEM5</accession>
<accession>Q5TEM6</accession>
<accession>Q5TEM7</accession>
<accession>Q9BZZ7</accession>
<accession>Q9UEG2</accession>
<gene>
    <name evidence="30" type="primary">MYO6</name>
    <name type="synonym">KIAA0389</name>
</gene>
<comment type="function">
    <text evidence="2 3 9 10 17 18 20 21 22">Myosins are actin-based motor molecules with ATPase activity (By similarity). Unconventional myosins serve in intracellular movements (By similarity). Myosin 6 is a reverse-direction motor protein that moves towards the minus-end of actin filaments (PubMed:10519557). Has slow rate of actin-activated ADP release due to weak ATP binding (By similarity). Functions in a variety of intracellular processes such as vesicular membrane trafficking and cell migration (By similarity). Required for the structural integrity of the Golgi apparatus via the p53-dependent pro-survival pathway (PubMed:16507995). Appears to be involved in a very early step of clathrin-mediated endocytosis in polarized epithelial cells (PubMed:11447109). Together with TOM1, mediates delivery of endocytic cargo to autophagosomes thereby promoting autophagosome maturation and driving fusion with lysosomes (PubMed:23023224). Links TOM1 with autophagy receptors, such as TAX1BP1; CALCOCO2/NDP52 and OPTN (PubMed:31371777). May act as a regulator of F-actin dynamics (By similarity). As part of the DISP complex, may regulate the association of septins with actin and thereby regulate the actin cytoskeleton (PubMed:29467281). May play a role in transporting DAB2 from the plasma membrane to specific cellular targets (By similarity). May play a role in the extension and network organization of neurites (By similarity). Required for structural integrity of inner ear hair cells (By similarity). Required for the correct localization of CLIC5 and RDX at the stereocilium base (By similarity). Modulates RNA polymerase II-dependent transcription (PubMed:16949370).</text>
</comment>
<comment type="subunit">
    <text evidence="1 2 3 4 12 14 16 20 21 22">Homodimer; dimerization seems to implicate the unfolding of the three-helix bundle region creating an additional calmodulin binding site, and cargo binding (By similarity). Able to function as a monomer under specific conditions in vitro (PubMed:15044955). Forms a complex with CFTR and DAB2 in the apical membrane of epithelial cells (PubMed:15247260). Component of the DISP/DOCK7-induced septin displacement complex, at least composed of DOCK7, LRCH3 and MYO6 (PubMed:29467281). Binding to calmodulin through a unique insert, not found in other myosins, located in the neck region between the motor domain and the IQ domain appears to contribute to the directionality reversal (By similarity). This interaction occurs only if the C-terminal lobe of calmodulin is occupied by calcium (By similarity). Interaction with F-actin/ACTN1 occurs only at the apical brush border domain of the proximal tubule cells (By similarity). Interacts with DAB2 (PubMed:11967127). In vitro, the C-terminal globular tail binds a C-terminal region of DAB2 (By similarity). Interacts with CFTR (PubMed:15247260). Interacts with CABP5 (By similarity). Interacts with TOM1 (PubMed:23023224, PubMed:31371777). Interacts with OPTN (PubMed:31371777). Interacts with TAX1BP1 and CALCOCO2/NDP52 (PubMed:31371777). Interacts with TOM1L2 (PubMed:23023224). Interacts with CLIC5; may work together in a complex which also includes RDX and MYO6 to stabilize linkages between the plasma membrane and subjacent actin cytoskeleton at the base of stereocilia (By similarity).</text>
</comment>
<comment type="interaction">
    <interactant intactId="EBI-350606">
        <id>Q9UM54</id>
    </interactant>
    <interactant intactId="EBI-1171238">
        <id>P98082</id>
        <label>DAB2</label>
    </interactant>
    <organismsDiffer>false</organismsDiffer>
    <experiments>3</experiments>
</comment>
<comment type="interaction">
    <interactant intactId="EBI-350606">
        <id>Q9UM54</id>
    </interactant>
    <interactant intactId="EBI-2556210">
        <id>Q8TB52</id>
        <label>FBXO30</label>
    </interactant>
    <organismsDiffer>false</organismsDiffer>
    <experiments>2</experiments>
</comment>
<comment type="interaction">
    <interactant intactId="EBI-350606">
        <id>Q9UM54</id>
    </interactant>
    <interactant intactId="EBI-373132">
        <id>O14908</id>
        <label>GIPC1</label>
    </interactant>
    <organismsDiffer>false</organismsDiffer>
    <experiments>2</experiments>
</comment>
<comment type="interaction">
    <interactant intactId="EBI-350606">
        <id>Q9UM54</id>
    </interactant>
    <interactant intactId="EBI-8795942">
        <id>Q96II8</id>
        <label>LRCH3</label>
    </interactant>
    <organismsDiffer>false</organismsDiffer>
    <experiments>4</experiments>
</comment>
<comment type="interaction">
    <interactant intactId="EBI-350606">
        <id>Q9UM54</id>
    </interactant>
    <interactant intactId="EBI-3452240">
        <id>Q6ZVM7</id>
        <label>TOM1L2</label>
    </interactant>
    <organismsDiffer>false</organismsDiffer>
    <experiments>3</experiments>
</comment>
<comment type="interaction">
    <interactant intactId="EBI-350606">
        <id>Q9UM54</id>
    </interactant>
    <interactant intactId="EBI-1391846">
        <id>P98078</id>
        <label>Dab2</label>
    </interactant>
    <organismsDiffer>true</organismsDiffer>
    <experiments>4</experiments>
</comment>
<comment type="interaction">
    <interactant intactId="EBI-350606">
        <id>Q9UM54</id>
    </interactant>
    <interactant intactId="EBI-300855">
        <id>Q9Z0G0</id>
        <label>Gipc1</label>
    </interactant>
    <organismsDiffer>true</organismsDiffer>
    <experiments>4</experiments>
</comment>
<comment type="interaction">
    <interactant intactId="EBI-15706115">
        <id>Q9UM54-1</id>
    </interactant>
    <interactant intactId="EBI-8795942">
        <id>Q96II8</id>
        <label>LRCH3</label>
    </interactant>
    <organismsDiffer>false</organismsDiffer>
    <experiments>3</experiments>
</comment>
<comment type="interaction">
    <interactant intactId="EBI-15706115">
        <id>Q9UM54-1</id>
    </interactant>
    <interactant intactId="EBI-15706115">
        <id>Q9UM54-1</id>
        <label>MYO6</label>
    </interactant>
    <organismsDiffer>false</organismsDiffer>
    <experiments>3</experiments>
</comment>
<comment type="subcellular location">
    <subcellularLocation>
        <location evidence="17">Golgi apparatus</location>
        <location evidence="17">trans-Golgi network membrane</location>
        <topology evidence="17">Peripheral membrane protein</topology>
    </subcellularLocation>
    <subcellularLocation>
        <location evidence="17">Golgi apparatus</location>
    </subcellularLocation>
    <subcellularLocation>
        <location evidence="17 18">Nucleus</location>
    </subcellularLocation>
    <subcellularLocation>
        <location evidence="17">Cytoplasm</location>
        <location evidence="17">Perinuclear region</location>
    </subcellularLocation>
    <subcellularLocation>
        <location evidence="10">Membrane</location>
        <location evidence="10">Clathrin-coated pit</location>
    </subcellularLocation>
    <subcellularLocation>
        <location evidence="10">Cytoplasmic vesicle</location>
        <location evidence="10">Clathrin-coated vesicle</location>
    </subcellularLocation>
    <subcellularLocation>
        <location evidence="24">Cell projection</location>
        <location evidence="24">Filopodium</location>
    </subcellularLocation>
    <subcellularLocation>
        <location evidence="17">Cell projection</location>
        <location evidence="17">Ruffle membrane</location>
    </subcellularLocation>
    <subcellularLocation>
        <location evidence="24">Cell projection</location>
        <location evidence="24">Microvillus</location>
    </subcellularLocation>
    <subcellularLocation>
        <location evidence="18">Cytoplasm</location>
        <location evidence="18">Cytosol</location>
    </subcellularLocation>
    <subcellularLocation>
        <location evidence="20">Cytoplasmic vesicle</location>
        <location evidence="20">Autophagosome</location>
    </subcellularLocation>
    <subcellularLocation>
        <location evidence="20">Endosome</location>
    </subcellularLocation>
    <text evidence="4 12 17 20 24">Also present in endocyctic vesicles (PubMed:16507995). Translocates from membrane ruffles, endocytic vesicles and cytoplasm to Golgi apparatus, perinuclear membrane and nucleus through induction by p53 and p53-induced DNA damage (PubMed:16507995). Recruited into membrane ruffles from cell surface by EGF-stimulation (PubMed:9852149). Colocalizes with DAB2 in clathrin-coated pits/vesicles (PubMed:11967127). Colocalizes with OPTN at the Golgi complex and in vesicular structures close to the plasma membrane (By similarity). Recruited to endosomes by TOM1 and TOM1L2 (PubMed:23023224).</text>
</comment>
<comment type="subcellular location">
    <molecule>Isoform 3</molecule>
    <subcellularLocation>
        <location evidence="10">Cytoplasmic vesicle</location>
        <location evidence="10">Clathrin-coated vesicle membrane</location>
    </subcellularLocation>
</comment>
<comment type="subcellular location">
    <molecule>Isoform 4</molecule>
    <subcellularLocation>
        <location>Cytoplasmic vesicle</location>
        <location>Clathrin-coated vesicle membrane</location>
    </subcellularLocation>
    <subcellularLocation>
        <location evidence="10">Cell projection</location>
        <location evidence="10">Ruffle membrane</location>
    </subcellularLocation>
</comment>
<comment type="alternative products">
    <event type="alternative splicing"/>
    <isoform>
        <id>Q9UM54-3</id>
        <name>3</name>
        <sequence type="displayed"/>
    </isoform>
    <isoform>
        <id>Q9UM54-1</id>
        <name>1</name>
        <sequence type="described" ref="VSP_022332"/>
    </isoform>
    <isoform>
        <id>Q9UM54-2</id>
        <name>2</name>
        <sequence type="described" ref="VSP_007985"/>
    </isoform>
    <isoform>
        <id>Q9UM54-4</id>
        <name>4</name>
        <sequence type="described" ref="VSP_022333"/>
    </isoform>
    <isoform>
        <id>Q9UM54-5</id>
        <name>5</name>
        <sequence type="described" ref="VSP_007985 VSP_022333"/>
    </isoform>
    <isoform>
        <id>Q9UM54-6</id>
        <name>6</name>
        <sequence type="described" ref="VSP_042208"/>
    </isoform>
</comment>
<comment type="tissue specificity">
    <text evidence="23">Expressed in most tissues examined including heart, brain, placenta, pancreas, spleen, thymus, prostate, testis, ovary, small intestine and colon. Highest levels in brain, pancreas, testis and small intestine. Also expressed in fetal brain and cochlea. Isoform 1 and isoform 2, containing the small insert, and isoform 4, containing neither insert, are expressed in unpolarized epithelial cells.</text>
</comment>
<comment type="domain">
    <text evidence="2">Divided into three regions: a N-terminal motor (head) domain, followed by a neck domain consisting of a calmodulin-binding linker domain and a single IQ motif, and a C-terminal tail region with a three-helix bundle region, a SAH domain and a unique globular domain required for interaction with other proteins such as cargo-binding.</text>
</comment>
<comment type="domain">
    <text evidence="19">The SAH (single alpha-helix) region is characterized by a high content of charged residues which are predicted to stabilize the alpha-helical structure by ionic bonds (PubMed:18511944). Its contribution to the mechanism conferring the myosin movement on actin filaments is debated (PubMed:18511944).</text>
</comment>
<comment type="PTM">
    <text evidence="24">Phosphorylation in the motor domain, induced by EGF, results in translocation of MYO6 from the cell surface to membrane ruffles and affects F-actin dynamics. Phosphorylated in vitro by p21-activated kinase (PAK).</text>
</comment>
<comment type="disease" evidence="11">
    <disease id="DI-00847">
        <name>Deafness, autosomal dominant, 22</name>
        <acronym>DFNA22</acronym>
        <description>A form of non-syndromic sensorineural hearing loss. Sensorineural deafness results from damage to the neural receptors of the inner ear, the nerve pathways to the brain, or the area of the brain that receives sound information. DFNA22 is progressive and postlingual, with onset during childhood. By the age of approximately 50 years, affected individuals invariably have profound sensorineural deafness.</description>
        <dbReference type="MIM" id="606346"/>
    </disease>
    <text>The disease is caused by variants affecting the gene represented in this entry.</text>
</comment>
<comment type="disease" evidence="13">
    <disease id="DI-00874">
        <name>Deafness, autosomal recessive, 37</name>
        <acronym>DFNB37</acronym>
        <description>A form of non-syndromic sensorineural hearing loss. Sensorineural deafness results from damage to the neural receptors of the inner ear, the nerve pathways to the brain, or the area of the brain that receives sound information.</description>
        <dbReference type="MIM" id="607821"/>
    </disease>
    <text>The disease is caused by variants affecting the gene represented in this entry.</text>
</comment>
<comment type="disease" evidence="15">
    <disease id="DI-01013">
        <name>Deafness, autosomal dominant 22, with hypertrophic cardiomyopathy</name>
        <acronym>DFNHCM</acronym>
        <description>An autosomal dominant sensorineural deafness associated with hypertrophic cardiomyopathy.</description>
        <dbReference type="MIM" id="606346"/>
    </disease>
    <text>The disease is caused by variants affecting the gene represented in this entry.</text>
</comment>
<comment type="similarity">
    <text evidence="29">Belongs to the TRAFAC class myosin-kinesin ATPase superfamily. Myosin family.</text>
</comment>
<comment type="caution">
    <text evidence="29">Represents an unconventional myosin. This protein should not be confused with the conventional myosin-6 (MYH6).</text>
</comment>
<comment type="caution">
    <text evidence="29">Originally predicted to contain a coiled coil domain but generally accepted to contain a stable SAH domain instead.</text>
</comment>
<comment type="sequence caution" evidence="29">
    <conflict type="erroneous initiation">
        <sequence resource="EMBL-CDS" id="BAA20843"/>
    </conflict>
    <text>Extended N-terminus.</text>
</comment>
<dbReference type="EMBL" id="U90236">
    <property type="protein sequence ID" value="AAC51654.2"/>
    <property type="molecule type" value="mRNA"/>
</dbReference>
<dbReference type="EMBL" id="AF229111">
    <property type="protein sequence ID" value="AAK00229.1"/>
    <property type="molecule type" value="Genomic_DNA"/>
</dbReference>
<dbReference type="EMBL" id="AF229082">
    <property type="protein sequence ID" value="AAK00229.1"/>
    <property type="status" value="JOINED"/>
    <property type="molecule type" value="Genomic_DNA"/>
</dbReference>
<dbReference type="EMBL" id="AF229083">
    <property type="protein sequence ID" value="AAK00229.1"/>
    <property type="status" value="JOINED"/>
    <property type="molecule type" value="Genomic_DNA"/>
</dbReference>
<dbReference type="EMBL" id="AF229084">
    <property type="protein sequence ID" value="AAK00229.1"/>
    <property type="status" value="JOINED"/>
    <property type="molecule type" value="Genomic_DNA"/>
</dbReference>
<dbReference type="EMBL" id="AF229085">
    <property type="protein sequence ID" value="AAK00229.1"/>
    <property type="status" value="JOINED"/>
    <property type="molecule type" value="Genomic_DNA"/>
</dbReference>
<dbReference type="EMBL" id="AF229086">
    <property type="protein sequence ID" value="AAK00229.1"/>
    <property type="status" value="JOINED"/>
    <property type="molecule type" value="Genomic_DNA"/>
</dbReference>
<dbReference type="EMBL" id="AF229087">
    <property type="protein sequence ID" value="AAK00229.1"/>
    <property type="status" value="JOINED"/>
    <property type="molecule type" value="Genomic_DNA"/>
</dbReference>
<dbReference type="EMBL" id="AF229088">
    <property type="protein sequence ID" value="AAK00229.1"/>
    <property type="status" value="JOINED"/>
    <property type="molecule type" value="Genomic_DNA"/>
</dbReference>
<dbReference type="EMBL" id="AF229089">
    <property type="protein sequence ID" value="AAK00229.1"/>
    <property type="status" value="JOINED"/>
    <property type="molecule type" value="Genomic_DNA"/>
</dbReference>
<dbReference type="EMBL" id="AF229090">
    <property type="protein sequence ID" value="AAK00229.1"/>
    <property type="status" value="JOINED"/>
    <property type="molecule type" value="Genomic_DNA"/>
</dbReference>
<dbReference type="EMBL" id="AF229091">
    <property type="protein sequence ID" value="AAK00229.1"/>
    <property type="status" value="JOINED"/>
    <property type="molecule type" value="Genomic_DNA"/>
</dbReference>
<dbReference type="EMBL" id="AF229092">
    <property type="protein sequence ID" value="AAK00229.1"/>
    <property type="status" value="JOINED"/>
    <property type="molecule type" value="Genomic_DNA"/>
</dbReference>
<dbReference type="EMBL" id="AF229093">
    <property type="protein sequence ID" value="AAK00229.1"/>
    <property type="status" value="JOINED"/>
    <property type="molecule type" value="Genomic_DNA"/>
</dbReference>
<dbReference type="EMBL" id="AF229094">
    <property type="protein sequence ID" value="AAK00229.1"/>
    <property type="status" value="JOINED"/>
    <property type="molecule type" value="Genomic_DNA"/>
</dbReference>
<dbReference type="EMBL" id="AF229095">
    <property type="protein sequence ID" value="AAK00229.1"/>
    <property type="status" value="JOINED"/>
    <property type="molecule type" value="Genomic_DNA"/>
</dbReference>
<dbReference type="EMBL" id="AF229096">
    <property type="protein sequence ID" value="AAK00229.1"/>
    <property type="status" value="JOINED"/>
    <property type="molecule type" value="Genomic_DNA"/>
</dbReference>
<dbReference type="EMBL" id="AF229097">
    <property type="protein sequence ID" value="AAK00229.1"/>
    <property type="status" value="JOINED"/>
    <property type="molecule type" value="Genomic_DNA"/>
</dbReference>
<dbReference type="EMBL" id="AF229098">
    <property type="protein sequence ID" value="AAK00229.1"/>
    <property type="status" value="JOINED"/>
    <property type="molecule type" value="Genomic_DNA"/>
</dbReference>
<dbReference type="EMBL" id="AF229099">
    <property type="protein sequence ID" value="AAK00229.1"/>
    <property type="status" value="JOINED"/>
    <property type="molecule type" value="Genomic_DNA"/>
</dbReference>
<dbReference type="EMBL" id="AF229100">
    <property type="protein sequence ID" value="AAK00229.1"/>
    <property type="status" value="JOINED"/>
    <property type="molecule type" value="Genomic_DNA"/>
</dbReference>
<dbReference type="EMBL" id="AF229101">
    <property type="protein sequence ID" value="AAK00229.1"/>
    <property type="status" value="JOINED"/>
    <property type="molecule type" value="Genomic_DNA"/>
</dbReference>
<dbReference type="EMBL" id="AF229102">
    <property type="protein sequence ID" value="AAK00229.1"/>
    <property type="status" value="JOINED"/>
    <property type="molecule type" value="Genomic_DNA"/>
</dbReference>
<dbReference type="EMBL" id="AF229103">
    <property type="protein sequence ID" value="AAK00229.1"/>
    <property type="status" value="JOINED"/>
    <property type="molecule type" value="Genomic_DNA"/>
</dbReference>
<dbReference type="EMBL" id="AF229104">
    <property type="protein sequence ID" value="AAK00229.1"/>
    <property type="status" value="JOINED"/>
    <property type="molecule type" value="Genomic_DNA"/>
</dbReference>
<dbReference type="EMBL" id="AF229105">
    <property type="protein sequence ID" value="AAK00229.1"/>
    <property type="status" value="JOINED"/>
    <property type="molecule type" value="Genomic_DNA"/>
</dbReference>
<dbReference type="EMBL" id="AF229106">
    <property type="protein sequence ID" value="AAK00229.1"/>
    <property type="status" value="JOINED"/>
    <property type="molecule type" value="Genomic_DNA"/>
</dbReference>
<dbReference type="EMBL" id="AF229107">
    <property type="protein sequence ID" value="AAK00229.1"/>
    <property type="status" value="JOINED"/>
    <property type="molecule type" value="Genomic_DNA"/>
</dbReference>
<dbReference type="EMBL" id="AF229108">
    <property type="protein sequence ID" value="AAK00229.1"/>
    <property type="status" value="JOINED"/>
    <property type="molecule type" value="Genomic_DNA"/>
</dbReference>
<dbReference type="EMBL" id="AF229109">
    <property type="protein sequence ID" value="AAK00229.1"/>
    <property type="status" value="JOINED"/>
    <property type="molecule type" value="Genomic_DNA"/>
</dbReference>
<dbReference type="EMBL" id="AF229110">
    <property type="protein sequence ID" value="AAK00229.1"/>
    <property type="status" value="JOINED"/>
    <property type="molecule type" value="Genomic_DNA"/>
</dbReference>
<dbReference type="EMBL" id="AL109897">
    <property type="status" value="NOT_ANNOTATED_CDS"/>
    <property type="molecule type" value="Genomic_DNA"/>
</dbReference>
<dbReference type="EMBL" id="AL136093">
    <property type="status" value="NOT_ANNOTATED_CDS"/>
    <property type="molecule type" value="Genomic_DNA"/>
</dbReference>
<dbReference type="EMBL" id="AB002387">
    <property type="protein sequence ID" value="BAA20843.2"/>
    <property type="status" value="ALT_INIT"/>
    <property type="molecule type" value="mRNA"/>
</dbReference>
<dbReference type="EMBL" id="CH471051">
    <property type="protein sequence ID" value="EAW48730.1"/>
    <property type="molecule type" value="Genomic_DNA"/>
</dbReference>
<dbReference type="EMBL" id="CH471051">
    <property type="protein sequence ID" value="EAW48731.1"/>
    <property type="molecule type" value="Genomic_DNA"/>
</dbReference>
<dbReference type="EMBL" id="BC146764">
    <property type="protein sequence ID" value="AAI46765.1"/>
    <property type="molecule type" value="mRNA"/>
</dbReference>
<dbReference type="EMBL" id="BP333853">
    <property type="status" value="NOT_ANNOTATED_CDS"/>
    <property type="molecule type" value="mRNA"/>
</dbReference>
<dbReference type="CCDS" id="CCDS34487.1">
    <molecule id="Q9UM54-1"/>
</dbReference>
<dbReference type="CCDS" id="CCDS75481.1">
    <molecule id="Q9UM54-2"/>
</dbReference>
<dbReference type="CCDS" id="CCDS93950.1">
    <molecule id="Q9UM54-5"/>
</dbReference>
<dbReference type="RefSeq" id="NP_001287828.1">
    <molecule id="Q9UM54-2"/>
    <property type="nucleotide sequence ID" value="NM_001300899.2"/>
</dbReference>
<dbReference type="RefSeq" id="NP_004990.3">
    <molecule id="Q9UM54-1"/>
    <property type="nucleotide sequence ID" value="NM_004999.3"/>
</dbReference>
<dbReference type="PDB" id="2N0Z">
    <property type="method" value="NMR"/>
    <property type="chains" value="A=1080-1122"/>
</dbReference>
<dbReference type="PDB" id="2N10">
    <property type="method" value="NMR"/>
    <property type="chains" value="A=1080-1131"/>
</dbReference>
<dbReference type="PDB" id="2N11">
    <property type="method" value="NMR"/>
    <property type="chains" value="A=998-1071"/>
</dbReference>
<dbReference type="PDB" id="2N12">
    <property type="method" value="NMR"/>
    <property type="chains" value="A=1050-1131"/>
</dbReference>
<dbReference type="PDB" id="2N13">
    <property type="method" value="NMR"/>
    <property type="chains" value="A/D=1080-1122"/>
</dbReference>
<dbReference type="PDB" id="6E5N">
    <property type="method" value="NMR"/>
    <property type="chains" value="B=1050-1131"/>
</dbReference>
<dbReference type="PDB" id="6J56">
    <property type="method" value="X-ray"/>
    <property type="resolution" value="1.80 A"/>
    <property type="chains" value="A/B=1166-1294"/>
</dbReference>
<dbReference type="PDB" id="8W41">
    <property type="method" value="EM"/>
    <property type="resolution" value="3.54 A"/>
    <property type="chains" value="A=1-1294"/>
</dbReference>
<dbReference type="PDBsum" id="2N0Z"/>
<dbReference type="PDBsum" id="2N10"/>
<dbReference type="PDBsum" id="2N11"/>
<dbReference type="PDBsum" id="2N12"/>
<dbReference type="PDBsum" id="2N13"/>
<dbReference type="PDBsum" id="6E5N"/>
<dbReference type="PDBsum" id="6J56"/>
<dbReference type="PDBsum" id="8W41"/>
<dbReference type="EMDB" id="EMD-37260"/>
<dbReference type="EMDB" id="EMD-37261"/>
<dbReference type="SMR" id="Q9UM54"/>
<dbReference type="BioGRID" id="110730">
    <property type="interactions" value="407"/>
</dbReference>
<dbReference type="ComplexPortal" id="CPX-7724">
    <property type="entry name" value="LIFT actin modulation complex"/>
</dbReference>
<dbReference type="ComplexPortal" id="CPX-7725">
    <property type="entry name" value="DISP septin regulator complex"/>
</dbReference>
<dbReference type="DIP" id="DIP-33123N"/>
<dbReference type="FunCoup" id="Q9UM54">
    <property type="interactions" value="1781"/>
</dbReference>
<dbReference type="IntAct" id="Q9UM54">
    <property type="interactions" value="262"/>
</dbReference>
<dbReference type="MINT" id="Q9UM54"/>
<dbReference type="STRING" id="9606.ENSP00000358994"/>
<dbReference type="GlyGen" id="Q9UM54">
    <property type="glycosylation" value="3 sites, 1 O-linked glycan (2 sites)"/>
</dbReference>
<dbReference type="iPTMnet" id="Q9UM54"/>
<dbReference type="MetOSite" id="Q9UM54"/>
<dbReference type="PhosphoSitePlus" id="Q9UM54"/>
<dbReference type="SwissPalm" id="Q9UM54"/>
<dbReference type="BioMuta" id="MYO6"/>
<dbReference type="DMDM" id="122065628"/>
<dbReference type="jPOST" id="Q9UM54"/>
<dbReference type="MassIVE" id="Q9UM54"/>
<dbReference type="PaxDb" id="9606-ENSP00000358994"/>
<dbReference type="PeptideAtlas" id="Q9UM54"/>
<dbReference type="ProteomicsDB" id="85177">
    <molecule id="Q9UM54-3"/>
</dbReference>
<dbReference type="ProteomicsDB" id="85178">
    <molecule id="Q9UM54-1"/>
</dbReference>
<dbReference type="ProteomicsDB" id="85179">
    <molecule id="Q9UM54-2"/>
</dbReference>
<dbReference type="ProteomicsDB" id="85180">
    <molecule id="Q9UM54-4"/>
</dbReference>
<dbReference type="ProteomicsDB" id="85181">
    <molecule id="Q9UM54-5"/>
</dbReference>
<dbReference type="ProteomicsDB" id="85182">
    <molecule id="Q9UM54-6"/>
</dbReference>
<dbReference type="Pumba" id="Q9UM54"/>
<dbReference type="Antibodypedia" id="4385">
    <property type="antibodies" value="144 antibodies from 28 providers"/>
</dbReference>
<dbReference type="DNASU" id="4646"/>
<dbReference type="Ensembl" id="ENST00000369977.8">
    <molecule id="Q9UM54-1"/>
    <property type="protein sequence ID" value="ENSP00000358994.3"/>
    <property type="gene ID" value="ENSG00000196586.17"/>
</dbReference>
<dbReference type="Ensembl" id="ENST00000369985.9">
    <molecule id="Q9UM54-2"/>
    <property type="protein sequence ID" value="ENSP00000359002.3"/>
    <property type="gene ID" value="ENSG00000196586.17"/>
</dbReference>
<dbReference type="Ensembl" id="ENST00000615563.4">
    <molecule id="Q9UM54-2"/>
    <property type="protein sequence ID" value="ENSP00000478013.1"/>
    <property type="gene ID" value="ENSG00000196586.17"/>
</dbReference>
<dbReference type="GeneID" id="4646"/>
<dbReference type="KEGG" id="hsa:4646"/>
<dbReference type="MANE-Select" id="ENST00000369977.8">
    <molecule id="Q9UM54-1"/>
    <property type="protein sequence ID" value="ENSP00000358994.3"/>
    <property type="RefSeq nucleotide sequence ID" value="NM_004999.4"/>
    <property type="RefSeq protein sequence ID" value="NP_004990.3"/>
</dbReference>
<dbReference type="UCSC" id="uc003pih.2">
    <molecule id="Q9UM54-3"/>
    <property type="organism name" value="human"/>
</dbReference>
<dbReference type="AGR" id="HGNC:7605"/>
<dbReference type="CTD" id="4646"/>
<dbReference type="DisGeNET" id="4646"/>
<dbReference type="GeneCards" id="MYO6"/>
<dbReference type="GeneReviews" id="MYO6"/>
<dbReference type="HGNC" id="HGNC:7605">
    <property type="gene designation" value="MYO6"/>
</dbReference>
<dbReference type="HPA" id="ENSG00000196586">
    <property type="expression patterns" value="Low tissue specificity"/>
</dbReference>
<dbReference type="MalaCards" id="MYO6"/>
<dbReference type="MIM" id="600970">
    <property type="type" value="gene"/>
</dbReference>
<dbReference type="MIM" id="606346">
    <property type="type" value="phenotype"/>
</dbReference>
<dbReference type="MIM" id="607821">
    <property type="type" value="phenotype"/>
</dbReference>
<dbReference type="neXtProt" id="NX_Q9UM54"/>
<dbReference type="OpenTargets" id="ENSG00000196586"/>
<dbReference type="Orphanet" id="228012">
    <property type="disease" value="Progressive sensorineural hearing loss-hypertrophic cardiomyopathy syndrome"/>
</dbReference>
<dbReference type="Orphanet" id="90635">
    <property type="disease" value="Rare autosomal dominant non-syndromic sensorineural deafness type DFNA"/>
</dbReference>
<dbReference type="Orphanet" id="90636">
    <property type="disease" value="Rare autosomal recessive non-syndromic sensorineural deafness type DFNB"/>
</dbReference>
<dbReference type="PharmGKB" id="PA31410"/>
<dbReference type="VEuPathDB" id="HostDB:ENSG00000196586"/>
<dbReference type="eggNOG" id="KOG0163">
    <property type="taxonomic scope" value="Eukaryota"/>
</dbReference>
<dbReference type="GeneTree" id="ENSGT00940000156078"/>
<dbReference type="InParanoid" id="Q9UM54"/>
<dbReference type="OMA" id="LNKGCTQ"/>
<dbReference type="OrthoDB" id="6108017at2759"/>
<dbReference type="PAN-GO" id="Q9UM54">
    <property type="GO annotations" value="13 GO annotations based on evolutionary models"/>
</dbReference>
<dbReference type="PhylomeDB" id="Q9UM54"/>
<dbReference type="TreeFam" id="TF351449"/>
<dbReference type="PathwayCommons" id="Q9UM54"/>
<dbReference type="Reactome" id="R-HSA-190873">
    <property type="pathway name" value="Gap junction degradation"/>
</dbReference>
<dbReference type="Reactome" id="R-HSA-399719">
    <property type="pathway name" value="Trafficking of AMPA receptors"/>
</dbReference>
<dbReference type="Reactome" id="R-HSA-9013418">
    <property type="pathway name" value="RHOBTB2 GTPase cycle"/>
</dbReference>
<dbReference type="Reactome" id="R-HSA-9013420">
    <property type="pathway name" value="RHOU GTPase cycle"/>
</dbReference>
<dbReference type="Reactome" id="R-HSA-9013422">
    <property type="pathway name" value="RHOBTB1 GTPase cycle"/>
</dbReference>
<dbReference type="SignaLink" id="Q9UM54"/>
<dbReference type="SIGNOR" id="Q9UM54"/>
<dbReference type="BioGRID-ORCS" id="4646">
    <property type="hits" value="13 hits in 1162 CRISPR screens"/>
</dbReference>
<dbReference type="CD-CODE" id="232F8A39">
    <property type="entry name" value="P-body"/>
</dbReference>
<dbReference type="CD-CODE" id="DEE660B4">
    <property type="entry name" value="Stress granule"/>
</dbReference>
<dbReference type="CD-CODE" id="FB4E32DD">
    <property type="entry name" value="Presynaptic clusters and postsynaptic densities"/>
</dbReference>
<dbReference type="ChiTaRS" id="MYO6">
    <property type="organism name" value="human"/>
</dbReference>
<dbReference type="EvolutionaryTrace" id="Q9UM54"/>
<dbReference type="GeneWiki" id="MYO6"/>
<dbReference type="GenomeRNAi" id="4646"/>
<dbReference type="Pharos" id="Q9UM54">
    <property type="development level" value="Tbio"/>
</dbReference>
<dbReference type="PRO" id="PR:Q9UM54"/>
<dbReference type="Proteomes" id="UP000005640">
    <property type="component" value="Chromosome 6"/>
</dbReference>
<dbReference type="RNAct" id="Q9UM54">
    <property type="molecule type" value="protein"/>
</dbReference>
<dbReference type="Bgee" id="ENSG00000196586">
    <property type="expression patterns" value="Expressed in amniotic fluid and 196 other cell types or tissues"/>
</dbReference>
<dbReference type="ExpressionAtlas" id="Q9UM54">
    <property type="expression patterns" value="baseline and differential"/>
</dbReference>
<dbReference type="GO" id="GO:0015629">
    <property type="term" value="C:actin cytoskeleton"/>
    <property type="evidence" value="ECO:0000318"/>
    <property type="project" value="GO_Central"/>
</dbReference>
<dbReference type="GO" id="GO:0005884">
    <property type="term" value="C:actin filament"/>
    <property type="evidence" value="ECO:0000250"/>
    <property type="project" value="UniProtKB"/>
</dbReference>
<dbReference type="GO" id="GO:0045177">
    <property type="term" value="C:apical part of cell"/>
    <property type="evidence" value="ECO:0007669"/>
    <property type="project" value="Ensembl"/>
</dbReference>
<dbReference type="GO" id="GO:0005776">
    <property type="term" value="C:autophagosome"/>
    <property type="evidence" value="ECO:0007669"/>
    <property type="project" value="UniProtKB-SubCell"/>
</dbReference>
<dbReference type="GO" id="GO:0005938">
    <property type="term" value="C:cell cortex"/>
    <property type="evidence" value="ECO:0000250"/>
    <property type="project" value="UniProtKB"/>
</dbReference>
<dbReference type="GO" id="GO:0005905">
    <property type="term" value="C:clathrin-coated pit"/>
    <property type="evidence" value="ECO:0007669"/>
    <property type="project" value="UniProtKB-SubCell"/>
</dbReference>
<dbReference type="GO" id="GO:0030665">
    <property type="term" value="C:clathrin-coated vesicle membrane"/>
    <property type="evidence" value="ECO:0007669"/>
    <property type="project" value="UniProtKB-SubCell"/>
</dbReference>
<dbReference type="GO" id="GO:0005737">
    <property type="term" value="C:cytoplasm"/>
    <property type="evidence" value="ECO:0000314"/>
    <property type="project" value="UniProtKB"/>
</dbReference>
<dbReference type="GO" id="GO:0031410">
    <property type="term" value="C:cytoplasmic vesicle"/>
    <property type="evidence" value="ECO:0000314"/>
    <property type="project" value="UniProtKB"/>
</dbReference>
<dbReference type="GO" id="GO:0005829">
    <property type="term" value="C:cytosol"/>
    <property type="evidence" value="ECO:0000304"/>
    <property type="project" value="Reactome"/>
</dbReference>
<dbReference type="GO" id="GO:0030139">
    <property type="term" value="C:endocytic vesicle"/>
    <property type="evidence" value="ECO:0000318"/>
    <property type="project" value="GO_Central"/>
</dbReference>
<dbReference type="GO" id="GO:0005768">
    <property type="term" value="C:endosome"/>
    <property type="evidence" value="ECO:0007669"/>
    <property type="project" value="UniProtKB-SubCell"/>
</dbReference>
<dbReference type="GO" id="GO:0070062">
    <property type="term" value="C:extracellular exosome"/>
    <property type="evidence" value="ECO:0007005"/>
    <property type="project" value="UniProtKB"/>
</dbReference>
<dbReference type="GO" id="GO:0031941">
    <property type="term" value="C:filamentous actin"/>
    <property type="evidence" value="ECO:0000314"/>
    <property type="project" value="UniProtKB"/>
</dbReference>
<dbReference type="GO" id="GO:0030175">
    <property type="term" value="C:filopodium"/>
    <property type="evidence" value="ECO:0007669"/>
    <property type="project" value="UniProtKB-SubCell"/>
</dbReference>
<dbReference type="GO" id="GO:0005794">
    <property type="term" value="C:Golgi apparatus"/>
    <property type="evidence" value="ECO:0000314"/>
    <property type="project" value="UniProtKB"/>
</dbReference>
<dbReference type="GO" id="GO:0005765">
    <property type="term" value="C:lysosomal membrane"/>
    <property type="evidence" value="ECO:0000304"/>
    <property type="project" value="Reactome"/>
</dbReference>
<dbReference type="GO" id="GO:0016020">
    <property type="term" value="C:membrane"/>
    <property type="evidence" value="ECO:0007005"/>
    <property type="project" value="UniProtKB"/>
</dbReference>
<dbReference type="GO" id="GO:0005902">
    <property type="term" value="C:microvillus"/>
    <property type="evidence" value="ECO:0007669"/>
    <property type="project" value="UniProtKB-SubCell"/>
</dbReference>
<dbReference type="GO" id="GO:0031965">
    <property type="term" value="C:nuclear membrane"/>
    <property type="evidence" value="ECO:0000314"/>
    <property type="project" value="UniProtKB"/>
</dbReference>
<dbReference type="GO" id="GO:0005654">
    <property type="term" value="C:nucleoplasm"/>
    <property type="evidence" value="ECO:0000314"/>
    <property type="project" value="HPA"/>
</dbReference>
<dbReference type="GO" id="GO:0005634">
    <property type="term" value="C:nucleus"/>
    <property type="evidence" value="ECO:0000314"/>
    <property type="project" value="UniProtKB"/>
</dbReference>
<dbReference type="GO" id="GO:0048471">
    <property type="term" value="C:perinuclear region of cytoplasm"/>
    <property type="evidence" value="ECO:0000314"/>
    <property type="project" value="UniProtKB"/>
</dbReference>
<dbReference type="GO" id="GO:0005886">
    <property type="term" value="C:plasma membrane"/>
    <property type="evidence" value="ECO:0000318"/>
    <property type="project" value="GO_Central"/>
</dbReference>
<dbReference type="GO" id="GO:0001726">
    <property type="term" value="C:ruffle"/>
    <property type="evidence" value="ECO:0000314"/>
    <property type="project" value="UniProtKB"/>
</dbReference>
<dbReference type="GO" id="GO:0032587">
    <property type="term" value="C:ruffle membrane"/>
    <property type="evidence" value="ECO:0007669"/>
    <property type="project" value="UniProtKB-SubCell"/>
</dbReference>
<dbReference type="GO" id="GO:0016461">
    <property type="term" value="C:unconventional myosin complex"/>
    <property type="evidence" value="ECO:0000304"/>
    <property type="project" value="UniProtKB"/>
</dbReference>
<dbReference type="GO" id="GO:0003779">
    <property type="term" value="F:actin binding"/>
    <property type="evidence" value="ECO:0000304"/>
    <property type="project" value="UniProtKB"/>
</dbReference>
<dbReference type="GO" id="GO:0051015">
    <property type="term" value="F:actin filament binding"/>
    <property type="evidence" value="ECO:0000314"/>
    <property type="project" value="UniProtKB"/>
</dbReference>
<dbReference type="GO" id="GO:0043531">
    <property type="term" value="F:ADP binding"/>
    <property type="evidence" value="ECO:0000250"/>
    <property type="project" value="UniProtKB"/>
</dbReference>
<dbReference type="GO" id="GO:0005524">
    <property type="term" value="F:ATP binding"/>
    <property type="evidence" value="ECO:0007669"/>
    <property type="project" value="UniProtKB-KW"/>
</dbReference>
<dbReference type="GO" id="GO:0005516">
    <property type="term" value="F:calmodulin binding"/>
    <property type="evidence" value="ECO:0000250"/>
    <property type="project" value="UniProtKB"/>
</dbReference>
<dbReference type="GO" id="GO:0003774">
    <property type="term" value="F:cytoskeletal motor activity"/>
    <property type="evidence" value="ECO:0000250"/>
    <property type="project" value="UniProtKB"/>
</dbReference>
<dbReference type="GO" id="GO:0042802">
    <property type="term" value="F:identical protein binding"/>
    <property type="evidence" value="ECO:0000353"/>
    <property type="project" value="IntAct"/>
</dbReference>
<dbReference type="GO" id="GO:0000146">
    <property type="term" value="F:microfilament motor activity"/>
    <property type="evidence" value="ECO:0000318"/>
    <property type="project" value="GO_Central"/>
</dbReference>
<dbReference type="GO" id="GO:0060001">
    <property type="term" value="F:minus-end directed microfilament motor activity"/>
    <property type="evidence" value="ECO:0000303"/>
    <property type="project" value="UniProtKB"/>
</dbReference>
<dbReference type="GO" id="GO:0007015">
    <property type="term" value="P:actin filament organization"/>
    <property type="evidence" value="ECO:0000318"/>
    <property type="project" value="GO_Central"/>
</dbReference>
<dbReference type="GO" id="GO:0030048">
    <property type="term" value="P:actin filament-based movement"/>
    <property type="evidence" value="ECO:0000250"/>
    <property type="project" value="UniProtKB"/>
</dbReference>
<dbReference type="GO" id="GO:0030330">
    <property type="term" value="P:DNA damage response, signal transduction by p53 class mediator"/>
    <property type="evidence" value="ECO:0000314"/>
    <property type="project" value="UniProtKB"/>
</dbReference>
<dbReference type="GO" id="GO:0006897">
    <property type="term" value="P:endocytosis"/>
    <property type="evidence" value="ECO:0000315"/>
    <property type="project" value="UniProtKB"/>
</dbReference>
<dbReference type="GO" id="GO:0042491">
    <property type="term" value="P:inner ear auditory receptor cell differentiation"/>
    <property type="evidence" value="ECO:0000318"/>
    <property type="project" value="GO_Central"/>
</dbReference>
<dbReference type="GO" id="GO:0042472">
    <property type="term" value="P:inner ear morphogenesis"/>
    <property type="evidence" value="ECO:0000318"/>
    <property type="project" value="GO_Central"/>
</dbReference>
<dbReference type="GO" id="GO:0006886">
    <property type="term" value="P:intracellular protein transport"/>
    <property type="evidence" value="ECO:0000250"/>
    <property type="project" value="UniProtKB"/>
</dbReference>
<dbReference type="GO" id="GO:0008104">
    <property type="term" value="P:protein localization"/>
    <property type="evidence" value="ECO:0000250"/>
    <property type="project" value="UniProtKB"/>
</dbReference>
<dbReference type="GO" id="GO:0051046">
    <property type="term" value="P:regulation of secretion"/>
    <property type="evidence" value="ECO:0000315"/>
    <property type="project" value="UniProtKB"/>
</dbReference>
<dbReference type="GO" id="GO:0009410">
    <property type="term" value="P:response to xenobiotic stimulus"/>
    <property type="evidence" value="ECO:0007669"/>
    <property type="project" value="Ensembl"/>
</dbReference>
<dbReference type="GO" id="GO:0007605">
    <property type="term" value="P:sensory perception of sound"/>
    <property type="evidence" value="ECO:0007669"/>
    <property type="project" value="UniProtKB-KW"/>
</dbReference>
<dbReference type="CDD" id="cd21759">
    <property type="entry name" value="CBD_MYO6-like"/>
    <property type="match status" value="1"/>
</dbReference>
<dbReference type="CDD" id="cd22294">
    <property type="entry name" value="MYO6_MIU_linker"/>
    <property type="match status" value="1"/>
</dbReference>
<dbReference type="CDD" id="cd01382">
    <property type="entry name" value="MYSc_Myo6"/>
    <property type="match status" value="1"/>
</dbReference>
<dbReference type="CDD" id="cd21958">
    <property type="entry name" value="MyUb_Myo6"/>
    <property type="match status" value="1"/>
</dbReference>
<dbReference type="FunFam" id="1.20.58.530:FF:000006">
    <property type="entry name" value="Putative unconventional myosin-VI"/>
    <property type="match status" value="1"/>
</dbReference>
<dbReference type="FunFam" id="2.30.30.360:FF:000002">
    <property type="entry name" value="Unconventional myosin-VI"/>
    <property type="match status" value="1"/>
</dbReference>
<dbReference type="FunFam" id="1.20.120.720:FF:000005">
    <property type="entry name" value="unconventional myosin-VI isoform X1"/>
    <property type="match status" value="1"/>
</dbReference>
<dbReference type="FunFam" id="3.30.70.1590:FF:000002">
    <property type="entry name" value="unconventional myosin-VI isoform X1"/>
    <property type="match status" value="1"/>
</dbReference>
<dbReference type="FunFam" id="3.40.850.10:FF:000018">
    <property type="entry name" value="unconventional myosin-VI isoform X1"/>
    <property type="match status" value="1"/>
</dbReference>
<dbReference type="FunFam" id="3.40.850.10:FF:000030">
    <property type="entry name" value="unconventional myosin-VI isoform X1"/>
    <property type="match status" value="1"/>
</dbReference>
<dbReference type="FunFam" id="1.10.10.820:FF:000005">
    <property type="entry name" value="unconventional myosin-VI isoform X2"/>
    <property type="match status" value="1"/>
</dbReference>
<dbReference type="Gene3D" id="1.10.10.820">
    <property type="match status" value="1"/>
</dbReference>
<dbReference type="Gene3D" id="1.20.58.530">
    <property type="match status" value="1"/>
</dbReference>
<dbReference type="Gene3D" id="3.30.70.1590">
    <property type="match status" value="1"/>
</dbReference>
<dbReference type="Gene3D" id="6.10.220.10">
    <property type="match status" value="1"/>
</dbReference>
<dbReference type="Gene3D" id="3.40.850.10">
    <property type="entry name" value="Kinesin motor domain"/>
    <property type="match status" value="2"/>
</dbReference>
<dbReference type="Gene3D" id="2.30.30.360">
    <property type="entry name" value="Myosin S1 fragment, N-terminal"/>
    <property type="match status" value="1"/>
</dbReference>
<dbReference type="Gene3D" id="1.20.120.720">
    <property type="entry name" value="Myosin VI head, motor domain, U50 subdomain"/>
    <property type="match status" value="1"/>
</dbReference>
<dbReference type="InterPro" id="IPR036961">
    <property type="entry name" value="Kinesin_motor_dom_sf"/>
</dbReference>
<dbReference type="InterPro" id="IPR049016">
    <property type="entry name" value="MYO6_lever"/>
</dbReference>
<dbReference type="InterPro" id="IPR032412">
    <property type="entry name" value="Myosin-VI_CBD"/>
</dbReference>
<dbReference type="InterPro" id="IPR001609">
    <property type="entry name" value="Myosin_head_motor_dom-like"/>
</dbReference>
<dbReference type="InterPro" id="IPR004009">
    <property type="entry name" value="Myosin_N"/>
</dbReference>
<dbReference type="InterPro" id="IPR008989">
    <property type="entry name" value="Myosin_S1_N"/>
</dbReference>
<dbReference type="InterPro" id="IPR036114">
    <property type="entry name" value="MYSc_Myo6"/>
</dbReference>
<dbReference type="InterPro" id="IPR027417">
    <property type="entry name" value="P-loop_NTPase"/>
</dbReference>
<dbReference type="PANTHER" id="PTHR13140">
    <property type="entry name" value="MYOSIN"/>
    <property type="match status" value="1"/>
</dbReference>
<dbReference type="PANTHER" id="PTHR13140:SF745">
    <property type="entry name" value="UNCONVENTIONAL MYOSIN-VI"/>
    <property type="match status" value="1"/>
</dbReference>
<dbReference type="Pfam" id="PF21521">
    <property type="entry name" value="MYO6_lever"/>
    <property type="match status" value="1"/>
</dbReference>
<dbReference type="Pfam" id="PF16521">
    <property type="entry name" value="Myosin-VI_CBD"/>
    <property type="match status" value="1"/>
</dbReference>
<dbReference type="Pfam" id="PF00063">
    <property type="entry name" value="Myosin_head"/>
    <property type="match status" value="1"/>
</dbReference>
<dbReference type="PRINTS" id="PR00193">
    <property type="entry name" value="MYOSINHEAVY"/>
</dbReference>
<dbReference type="SMART" id="SM00242">
    <property type="entry name" value="MYSc"/>
    <property type="match status" value="1"/>
</dbReference>
<dbReference type="SUPFAM" id="SSF52540">
    <property type="entry name" value="P-loop containing nucleoside triphosphate hydrolases"/>
    <property type="match status" value="1"/>
</dbReference>
<dbReference type="PROSITE" id="PS51456">
    <property type="entry name" value="MYOSIN_MOTOR"/>
    <property type="match status" value="1"/>
</dbReference>
<dbReference type="PROSITE" id="PS51844">
    <property type="entry name" value="SH3_LIKE"/>
    <property type="match status" value="1"/>
</dbReference>
<proteinExistence type="evidence at protein level"/>